<comment type="function">
    <text evidence="6 9">Effector involved in the disease saprolegniosis in salmonids and other freshwater fish, resulting in considerable economic losses in aquaculture (Probable). Within the host fish cells, Htp1 is involved in the uptake of the S.parasitica effector Htp3 at a neutral pH (pH 7.5) and its release from vesicles into host cytosol where it degrades nucleic acids (PubMed:29904064).</text>
</comment>
<comment type="subunit">
    <text evidence="6">Interacts with the effector Htp3 within the host cells.</text>
</comment>
<comment type="subcellular location">
    <subcellularLocation>
        <location evidence="4">Secreted</location>
    </subcellularLocation>
    <subcellularLocation>
        <location evidence="4">Host cell</location>
    </subcellularLocation>
    <text evidence="5">Host cell surface binding and uptake is mediated by an interaction with tyrosine-O-sulfate-modified cell surface molecules and not via phospholipids, as has been reported for RxLR-effectors from plant pathogenic oomycetes.</text>
</comment>
<comment type="induction">
    <text evidence="4">Highly expressed in zoospores/cysts from S.parasitica and in the very early stages of infection on Oncorhynchus mykiss (rainbow trout) cells.</text>
</comment>
<comment type="domain">
    <text evidence="5">Has a conserved RxLR motif that acts to carry the protein into the host cell cytoplasm. Lacks the 'so-called' EER motif, which is found closely behind the RxLR motif in most of RxLR effector family members, but the presence of an EER motif is not always essential for the translocation of every RxLR effector into host cells, or for inducing a hypersensitive response.</text>
</comment>
<comment type="similarity">
    <text evidence="8">Belongs to the RxLR effector family.</text>
</comment>
<comment type="sequence caution" evidence="8">
    <conflict type="erroneous gene model prediction">
        <sequence resource="EMBL-CDS" id="KDO29921"/>
    </conflict>
</comment>
<reference key="1">
    <citation type="journal article" date="2010" name="FEMS Microbiol. Lett.">
        <title>The putative RxLR effector protein SpHtp1 from the fish pathogenic oomycete Saprolegnia parasitica is translocated into fish cells.</title>
        <authorList>
            <person name="van West P."/>
            <person name="de Bruijn I."/>
            <person name="Minor K.L."/>
            <person name="Phillips A.J."/>
            <person name="Robertson E.J."/>
            <person name="Wawra S."/>
            <person name="Bain J."/>
            <person name="Anderson V.L."/>
            <person name="Secombes C.J."/>
        </authorList>
    </citation>
    <scope>NUCLEOTIDE SEQUENCE [MRNA]</scope>
    <scope>INDUCTION</scope>
    <scope>SUBCELLULAR LOCATION</scope>
    <source>
        <strain>CBS 223.65</strain>
    </source>
</reference>
<reference key="2">
    <citation type="journal article" date="2013" name="PLoS Genet.">
        <title>Distinctive expansion of potential virulence genes in the genome of the oomycete fish pathogen Saprolegnia parasitica.</title>
        <authorList>
            <person name="Jiang R.H."/>
            <person name="de Bruijn I."/>
            <person name="Haas B.J."/>
            <person name="Belmonte R."/>
            <person name="Lobach L."/>
            <person name="Christie J."/>
            <person name="van den Ackerveken G."/>
            <person name="Bottin A."/>
            <person name="Bulone V."/>
            <person name="Diaz-Moreno S.M."/>
            <person name="Dumas B."/>
            <person name="Fan L."/>
            <person name="Gaulin E."/>
            <person name="Govers F."/>
            <person name="Grenville-Briggs L.J."/>
            <person name="Horner N.R."/>
            <person name="Levin J.Z."/>
            <person name="Mammella M."/>
            <person name="Meijer H.J."/>
            <person name="Morris P."/>
            <person name="Nusbaum C."/>
            <person name="Oome S."/>
            <person name="Phillips A.J."/>
            <person name="van Rooyen D."/>
            <person name="Rzeszutek E."/>
            <person name="Saraiva M."/>
            <person name="Secombes C.J."/>
            <person name="Seidl M.F."/>
            <person name="Snel B."/>
            <person name="Stassen J.H."/>
            <person name="Sykes S."/>
            <person name="Tripathy S."/>
            <person name="van den Berg H."/>
            <person name="Vega-Arreguin J.C."/>
            <person name="Wawra S."/>
            <person name="Young S.K."/>
            <person name="Zeng Q."/>
            <person name="Dieguez-Uribeondo J."/>
            <person name="Russ C."/>
            <person name="Tyler B.M."/>
            <person name="van West P."/>
        </authorList>
    </citation>
    <scope>NUCLEOTIDE SEQUENCE [LARGE SCALE GENOMIC DNA]</scope>
    <source>
        <strain>CBS 223.65</strain>
    </source>
</reference>
<reference key="3">
    <citation type="journal article" date="2012" name="Proc. Natl. Acad. Sci. U.S.A.">
        <title>Host-targeting protein 1 (SpHtp1) from the oomycete Saprolegnia parasitica translocates specifically into fish cells in a tyrosine-O-sulphate-dependent manner.</title>
        <authorList>
            <person name="Wawra S."/>
            <person name="Bain J."/>
            <person name="Durward E."/>
            <person name="de Bruijn I."/>
            <person name="Minor K.L."/>
            <person name="Matena A."/>
            <person name="Loebach L."/>
            <person name="Whisson S.C."/>
            <person name="Bayer P."/>
            <person name="Porter A.J."/>
            <person name="Birch P.R."/>
            <person name="Secombes C.J."/>
            <person name="van West P."/>
        </authorList>
    </citation>
    <scope>SUBCELLULAR LOCATION</scope>
    <scope>DOMAIN</scope>
</reference>
<reference key="4">
    <citation type="journal article" date="2018" name="Nat. Commun.">
        <title>Cell entry of a host-targeting protein of oomycetes requires gp96.</title>
        <authorList>
            <person name="Trusch F."/>
            <person name="Loebach L."/>
            <person name="Wawra S."/>
            <person name="Durward E."/>
            <person name="Wuensch A."/>
            <person name="Iberahim N.A."/>
            <person name="de Bruijn I."/>
            <person name="MacKenzie K."/>
            <person name="Willems A."/>
            <person name="Toloczko A."/>
            <person name="Dieguez-Uribeondo J."/>
            <person name="Rasmussen T."/>
            <person name="Schrader T."/>
            <person name="Bayer P."/>
            <person name="Secombes C.J."/>
            <person name="van West P."/>
        </authorList>
    </citation>
    <scope>FUNCTION</scope>
    <scope>INTERACTION WITH HTP3</scope>
</reference>
<evidence type="ECO:0000255" key="1"/>
<evidence type="ECO:0000255" key="2">
    <source>
        <dbReference type="PROSITE-ProRule" id="PRU00498"/>
    </source>
</evidence>
<evidence type="ECO:0000256" key="3">
    <source>
        <dbReference type="SAM" id="MobiDB-lite"/>
    </source>
</evidence>
<evidence type="ECO:0000269" key="4">
    <source>
    </source>
</evidence>
<evidence type="ECO:0000269" key="5">
    <source>
    </source>
</evidence>
<evidence type="ECO:0000269" key="6">
    <source>
    </source>
</evidence>
<evidence type="ECO:0000303" key="7">
    <source>
    </source>
</evidence>
<evidence type="ECO:0000305" key="8"/>
<evidence type="ECO:0000305" key="9">
    <source>
    </source>
</evidence>
<protein>
    <recommendedName>
        <fullName evidence="7">RxLR effector protein Htp1</fullName>
    </recommendedName>
    <alternativeName>
        <fullName evidence="7">Host targeting protein 1</fullName>
    </alternativeName>
</protein>
<gene>
    <name evidence="7" type="primary">Htp1</name>
    <name type="ORF">SPRG_19749</name>
</gene>
<keyword id="KW-0325">Glycoprotein</keyword>
<keyword id="KW-1185">Reference proteome</keyword>
<keyword id="KW-0964">Secreted</keyword>
<keyword id="KW-0732">Signal</keyword>
<keyword id="KW-0843">Virulence</keyword>
<name>HTP1_SAPPC</name>
<organism>
    <name type="scientific">Saprolegnia parasitica (strain CBS 223.65)</name>
    <dbReference type="NCBI Taxonomy" id="695850"/>
    <lineage>
        <taxon>Eukaryota</taxon>
        <taxon>Sar</taxon>
        <taxon>Stramenopiles</taxon>
        <taxon>Oomycota</taxon>
        <taxon>Saprolegniales</taxon>
        <taxon>Saprolegniaceae</taxon>
        <taxon>Saprolegnia</taxon>
    </lineage>
</organism>
<sequence>MRIHHPLTLAALCVVLHESLGAAQHSNNVARLEHYRIAEIEHWEKRHLRSDSRGHRHHAHHGQVIDKENNNSQEQATTGNSVETNQVPSTEPTKDKTTPMKNALFKLFREKKLKTKNAGNGHAHDDDDDSDFSDDDVPTNAPTDAPTGAPTDAPTDAPTVAPTDAPTDAPTEAPTNAPTGTDAPTDAPTDAQVVPTFD</sequence>
<dbReference type="EMBL" id="GU345745">
    <property type="protein sequence ID" value="ADB84848.1"/>
    <property type="molecule type" value="mRNA"/>
</dbReference>
<dbReference type="EMBL" id="KK583204">
    <property type="protein sequence ID" value="KDO29921.1"/>
    <property type="status" value="ALT_SEQ"/>
    <property type="molecule type" value="Genomic_DNA"/>
</dbReference>
<dbReference type="RefSeq" id="XP_012199566.1">
    <property type="nucleotide sequence ID" value="XM_012344176.1"/>
</dbReference>
<dbReference type="STRING" id="695850.D3JZP7"/>
<dbReference type="GlyCosmos" id="D3JZP7">
    <property type="glycosylation" value="1 site, No reported glycans"/>
</dbReference>
<dbReference type="EnsemblProtists" id="KDO29921">
    <property type="protein sequence ID" value="KDO29921"/>
    <property type="gene ID" value="SPRG_19749"/>
</dbReference>
<dbReference type="GeneID" id="24141037"/>
<dbReference type="KEGG" id="spar:SPRG_19749"/>
<dbReference type="OrthoDB" id="167615at2759"/>
<dbReference type="Proteomes" id="UP000030745">
    <property type="component" value="Unassembled WGS sequence"/>
</dbReference>
<dbReference type="GO" id="GO:0005576">
    <property type="term" value="C:extracellular region"/>
    <property type="evidence" value="ECO:0007669"/>
    <property type="project" value="UniProtKB-SubCell"/>
</dbReference>
<dbReference type="GO" id="GO:0043657">
    <property type="term" value="C:host cell"/>
    <property type="evidence" value="ECO:0007669"/>
    <property type="project" value="UniProtKB-SubCell"/>
</dbReference>
<feature type="signal peptide" evidence="1">
    <location>
        <begin position="1"/>
        <end position="23"/>
    </location>
</feature>
<feature type="chain" id="PRO_5003046573" description="RxLR effector protein Htp1">
    <location>
        <begin position="24"/>
        <end position="198"/>
    </location>
</feature>
<feature type="region of interest" description="Disordered" evidence="3">
    <location>
        <begin position="48"/>
        <end position="101"/>
    </location>
</feature>
<feature type="region of interest" description="Disordered" evidence="3">
    <location>
        <begin position="115"/>
        <end position="198"/>
    </location>
</feature>
<feature type="short sequence motif" description="RxLR" evidence="9">
    <location>
        <begin position="46"/>
        <end position="49"/>
    </location>
</feature>
<feature type="compositionally biased region" description="Polar residues" evidence="3">
    <location>
        <begin position="70"/>
        <end position="91"/>
    </location>
</feature>
<feature type="compositionally biased region" description="Acidic residues" evidence="3">
    <location>
        <begin position="126"/>
        <end position="137"/>
    </location>
</feature>
<feature type="compositionally biased region" description="Low complexity" evidence="3">
    <location>
        <begin position="173"/>
        <end position="191"/>
    </location>
</feature>
<feature type="glycosylation site" description="N-linked (GlcNAc...) asparagine" evidence="2">
    <location>
        <position position="70"/>
    </location>
</feature>
<proteinExistence type="evidence at protein level"/>
<accession>D3JZP7</accession>
<accession>A0A067CTQ5</accession>